<keyword id="KW-0012">Acyltransferase</keyword>
<keyword id="KW-0963">Cytoplasm</keyword>
<keyword id="KW-0808">Transferase</keyword>
<feature type="chain" id="PRO_0000321674" description="Octanoyltransferase">
    <location>
        <begin position="1"/>
        <end position="216"/>
    </location>
</feature>
<feature type="domain" description="BPL/LPL catalytic" evidence="2">
    <location>
        <begin position="31"/>
        <end position="205"/>
    </location>
</feature>
<feature type="active site" description="Acyl-thioester intermediate" evidence="1">
    <location>
        <position position="168"/>
    </location>
</feature>
<feature type="binding site" evidence="1">
    <location>
        <begin position="70"/>
        <end position="77"/>
    </location>
    <ligand>
        <name>substrate</name>
    </ligand>
</feature>
<feature type="binding site" evidence="1">
    <location>
        <begin position="137"/>
        <end position="139"/>
    </location>
    <ligand>
        <name>substrate</name>
    </ligand>
</feature>
<feature type="binding site" evidence="1">
    <location>
        <begin position="150"/>
        <end position="152"/>
    </location>
    <ligand>
        <name>substrate</name>
    </ligand>
</feature>
<feature type="site" description="Lowers pKa of active site Cys" evidence="1">
    <location>
        <position position="134"/>
    </location>
</feature>
<organism>
    <name type="scientific">Vibrio cholerae serotype O1 (strain ATCC 39541 / Classical Ogawa 395 / O395)</name>
    <dbReference type="NCBI Taxonomy" id="345073"/>
    <lineage>
        <taxon>Bacteria</taxon>
        <taxon>Pseudomonadati</taxon>
        <taxon>Pseudomonadota</taxon>
        <taxon>Gammaproteobacteria</taxon>
        <taxon>Vibrionales</taxon>
        <taxon>Vibrionaceae</taxon>
        <taxon>Vibrio</taxon>
    </lineage>
</organism>
<sequence length="216" mass="24702">MENQLLVRRLGRQDYTPVWQAMHQFTDQRDSTTRDEVWLVEHNPVFTQGQAGKAEHLLNTGDIPVVQSDRGGQVTYHGPGQLVAYFLIDLRRKKLGVRELVTHIENLVIHTLKHYQIESAARPDAPGVYVQNRKICSLGLRIRKGCSFHGLALNIQMDLAPFLRINPCGYAGMEMIQLSDLHPVSMEQVEKVLIQELVTLLDYEQVEFSTEAYNHE</sequence>
<reference key="1">
    <citation type="submission" date="2007-03" db="EMBL/GenBank/DDBJ databases">
        <authorList>
            <person name="Heidelberg J."/>
        </authorList>
    </citation>
    <scope>NUCLEOTIDE SEQUENCE [LARGE SCALE GENOMIC DNA]</scope>
    <source>
        <strain>ATCC 39541 / Classical Ogawa 395 / O395</strain>
    </source>
</reference>
<reference key="2">
    <citation type="journal article" date="2008" name="PLoS ONE">
        <title>A recalibrated molecular clock and independent origins for the cholera pandemic clones.</title>
        <authorList>
            <person name="Feng L."/>
            <person name="Reeves P.R."/>
            <person name="Lan R."/>
            <person name="Ren Y."/>
            <person name="Gao C."/>
            <person name="Zhou Z."/>
            <person name="Ren Y."/>
            <person name="Cheng J."/>
            <person name="Wang W."/>
            <person name="Wang J."/>
            <person name="Qian W."/>
            <person name="Li D."/>
            <person name="Wang L."/>
        </authorList>
    </citation>
    <scope>NUCLEOTIDE SEQUENCE [LARGE SCALE GENOMIC DNA]</scope>
    <source>
        <strain>ATCC 39541 / Classical Ogawa 395 / O395</strain>
    </source>
</reference>
<evidence type="ECO:0000255" key="1">
    <source>
        <dbReference type="HAMAP-Rule" id="MF_00013"/>
    </source>
</evidence>
<evidence type="ECO:0000255" key="2">
    <source>
        <dbReference type="PROSITE-ProRule" id="PRU01067"/>
    </source>
</evidence>
<evidence type="ECO:0000305" key="3"/>
<dbReference type="EC" id="2.3.1.181" evidence="1"/>
<dbReference type="EMBL" id="CP000627">
    <property type="protein sequence ID" value="ABQ20610.1"/>
    <property type="status" value="ALT_INIT"/>
    <property type="molecule type" value="Genomic_DNA"/>
</dbReference>
<dbReference type="EMBL" id="CP001235">
    <property type="protein sequence ID" value="ACP08971.1"/>
    <property type="status" value="ALT_INIT"/>
    <property type="molecule type" value="Genomic_DNA"/>
</dbReference>
<dbReference type="RefSeq" id="WP_000431345.1">
    <property type="nucleotide sequence ID" value="NZ_JAACZH010000005.1"/>
</dbReference>
<dbReference type="SMR" id="A5F2Y1"/>
<dbReference type="KEGG" id="vco:VC0395_A0468"/>
<dbReference type="KEGG" id="vcr:VC395_0959"/>
<dbReference type="PATRIC" id="fig|345073.21.peg.930"/>
<dbReference type="eggNOG" id="COG0321">
    <property type="taxonomic scope" value="Bacteria"/>
</dbReference>
<dbReference type="HOGENOM" id="CLU_035168_3_1_6"/>
<dbReference type="UniPathway" id="UPA00538">
    <property type="reaction ID" value="UER00592"/>
</dbReference>
<dbReference type="Proteomes" id="UP000000249">
    <property type="component" value="Chromosome 2"/>
</dbReference>
<dbReference type="GO" id="GO:0005737">
    <property type="term" value="C:cytoplasm"/>
    <property type="evidence" value="ECO:0007669"/>
    <property type="project" value="UniProtKB-SubCell"/>
</dbReference>
<dbReference type="GO" id="GO:0033819">
    <property type="term" value="F:lipoyl(octanoyl) transferase activity"/>
    <property type="evidence" value="ECO:0007669"/>
    <property type="project" value="UniProtKB-EC"/>
</dbReference>
<dbReference type="GO" id="GO:0036211">
    <property type="term" value="P:protein modification process"/>
    <property type="evidence" value="ECO:0007669"/>
    <property type="project" value="InterPro"/>
</dbReference>
<dbReference type="CDD" id="cd16444">
    <property type="entry name" value="LipB"/>
    <property type="match status" value="1"/>
</dbReference>
<dbReference type="FunFam" id="3.30.930.10:FF:000020">
    <property type="entry name" value="Octanoyltransferase"/>
    <property type="match status" value="1"/>
</dbReference>
<dbReference type="Gene3D" id="3.30.930.10">
    <property type="entry name" value="Bira Bifunctional Protein, Domain 2"/>
    <property type="match status" value="1"/>
</dbReference>
<dbReference type="HAMAP" id="MF_00013">
    <property type="entry name" value="LipB"/>
    <property type="match status" value="1"/>
</dbReference>
<dbReference type="InterPro" id="IPR045864">
    <property type="entry name" value="aa-tRNA-synth_II/BPL/LPL"/>
</dbReference>
<dbReference type="InterPro" id="IPR004143">
    <property type="entry name" value="BPL_LPL_catalytic"/>
</dbReference>
<dbReference type="InterPro" id="IPR000544">
    <property type="entry name" value="Octanoyltransferase"/>
</dbReference>
<dbReference type="InterPro" id="IPR020605">
    <property type="entry name" value="Octanoyltransferase_CS"/>
</dbReference>
<dbReference type="NCBIfam" id="TIGR00214">
    <property type="entry name" value="lipB"/>
    <property type="match status" value="1"/>
</dbReference>
<dbReference type="NCBIfam" id="NF010922">
    <property type="entry name" value="PRK14342.1"/>
    <property type="match status" value="1"/>
</dbReference>
<dbReference type="PANTHER" id="PTHR10993:SF7">
    <property type="entry name" value="LIPOYLTRANSFERASE 2, MITOCHONDRIAL-RELATED"/>
    <property type="match status" value="1"/>
</dbReference>
<dbReference type="PANTHER" id="PTHR10993">
    <property type="entry name" value="OCTANOYLTRANSFERASE"/>
    <property type="match status" value="1"/>
</dbReference>
<dbReference type="Pfam" id="PF21948">
    <property type="entry name" value="LplA-B_cat"/>
    <property type="match status" value="1"/>
</dbReference>
<dbReference type="PIRSF" id="PIRSF016262">
    <property type="entry name" value="LPLase"/>
    <property type="match status" value="1"/>
</dbReference>
<dbReference type="SUPFAM" id="SSF55681">
    <property type="entry name" value="Class II aaRS and biotin synthetases"/>
    <property type="match status" value="1"/>
</dbReference>
<dbReference type="PROSITE" id="PS51733">
    <property type="entry name" value="BPL_LPL_CATALYTIC"/>
    <property type="match status" value="1"/>
</dbReference>
<dbReference type="PROSITE" id="PS01313">
    <property type="entry name" value="LIPB"/>
    <property type="match status" value="1"/>
</dbReference>
<comment type="function">
    <text evidence="1">Catalyzes the transfer of endogenously produced octanoic acid from octanoyl-acyl-carrier-protein onto the lipoyl domains of lipoate-dependent enzymes. Lipoyl-ACP can also act as a substrate although octanoyl-ACP is likely to be the physiological substrate.</text>
</comment>
<comment type="catalytic activity">
    <reaction evidence="1">
        <text>octanoyl-[ACP] + L-lysyl-[protein] = N(6)-octanoyl-L-lysyl-[protein] + holo-[ACP] + H(+)</text>
        <dbReference type="Rhea" id="RHEA:17665"/>
        <dbReference type="Rhea" id="RHEA-COMP:9636"/>
        <dbReference type="Rhea" id="RHEA-COMP:9685"/>
        <dbReference type="Rhea" id="RHEA-COMP:9752"/>
        <dbReference type="Rhea" id="RHEA-COMP:9928"/>
        <dbReference type="ChEBI" id="CHEBI:15378"/>
        <dbReference type="ChEBI" id="CHEBI:29969"/>
        <dbReference type="ChEBI" id="CHEBI:64479"/>
        <dbReference type="ChEBI" id="CHEBI:78463"/>
        <dbReference type="ChEBI" id="CHEBI:78809"/>
        <dbReference type="EC" id="2.3.1.181"/>
    </reaction>
</comment>
<comment type="pathway">
    <text evidence="1">Protein modification; protein lipoylation via endogenous pathway; protein N(6)-(lipoyl)lysine from octanoyl-[acyl-carrier-protein]: step 1/2.</text>
</comment>
<comment type="subcellular location">
    <subcellularLocation>
        <location evidence="1">Cytoplasm</location>
    </subcellularLocation>
</comment>
<comment type="miscellaneous">
    <text evidence="1">In the reaction, the free carboxyl group of octanoic acid is attached via an amide linkage to the epsilon-amino group of a specific lysine residue of lipoyl domains of lipoate-dependent enzymes.</text>
</comment>
<comment type="similarity">
    <text evidence="1">Belongs to the LipB family.</text>
</comment>
<comment type="sequence caution" evidence="3">
    <conflict type="erroneous initiation">
        <sequence resource="EMBL-CDS" id="ABQ20610"/>
    </conflict>
    <text>Extended N-terminus.</text>
</comment>
<comment type="sequence caution" evidence="3">
    <conflict type="erroneous initiation">
        <sequence resource="EMBL-CDS" id="ACP08971"/>
    </conflict>
    <text>Extended N-terminus.</text>
</comment>
<accession>A5F2Y1</accession>
<accession>C3LYV5</accession>
<protein>
    <recommendedName>
        <fullName evidence="1">Octanoyltransferase</fullName>
        <ecNumber evidence="1">2.3.1.181</ecNumber>
    </recommendedName>
    <alternativeName>
        <fullName evidence="1">Lipoate-protein ligase B</fullName>
    </alternativeName>
    <alternativeName>
        <fullName evidence="1">Lipoyl/octanoyl transferase</fullName>
    </alternativeName>
    <alternativeName>
        <fullName evidence="1">Octanoyl-[acyl-carrier-protein]-protein N-octanoyltransferase</fullName>
    </alternativeName>
</protein>
<name>LIPB_VIBC3</name>
<gene>
    <name evidence="1" type="primary">lipB</name>
    <name type="ordered locus">VC0395_A0468</name>
    <name type="ordered locus">VC395_0959</name>
</gene>
<proteinExistence type="inferred from homology"/>